<keyword id="KW-0963">Cytoplasm</keyword>
<keyword id="KW-0488">Methylation</keyword>
<keyword id="KW-0648">Protein biosynthesis</keyword>
<dbReference type="EMBL" id="CP000675">
    <property type="protein sequence ID" value="ABQ55737.1"/>
    <property type="molecule type" value="Genomic_DNA"/>
</dbReference>
<dbReference type="RefSeq" id="WP_011947180.1">
    <property type="nucleotide sequence ID" value="NZ_JAPMSS010000012.1"/>
</dbReference>
<dbReference type="SMR" id="A5IED7"/>
<dbReference type="KEGG" id="lpc:LPC_1804"/>
<dbReference type="HOGENOM" id="CLU_036856_0_1_6"/>
<dbReference type="GO" id="GO:0005737">
    <property type="term" value="C:cytoplasm"/>
    <property type="evidence" value="ECO:0007669"/>
    <property type="project" value="UniProtKB-SubCell"/>
</dbReference>
<dbReference type="GO" id="GO:0016149">
    <property type="term" value="F:translation release factor activity, codon specific"/>
    <property type="evidence" value="ECO:0007669"/>
    <property type="project" value="UniProtKB-UniRule"/>
</dbReference>
<dbReference type="FunFam" id="3.30.160.20:FF:000004">
    <property type="entry name" value="Peptide chain release factor 1"/>
    <property type="match status" value="1"/>
</dbReference>
<dbReference type="FunFam" id="3.30.70.1660:FF:000002">
    <property type="entry name" value="Peptide chain release factor 1"/>
    <property type="match status" value="1"/>
</dbReference>
<dbReference type="FunFam" id="3.30.70.1660:FF:000004">
    <property type="entry name" value="Peptide chain release factor 1"/>
    <property type="match status" value="1"/>
</dbReference>
<dbReference type="Gene3D" id="3.30.160.20">
    <property type="match status" value="1"/>
</dbReference>
<dbReference type="Gene3D" id="3.30.70.1660">
    <property type="match status" value="1"/>
</dbReference>
<dbReference type="Gene3D" id="6.10.140.1950">
    <property type="match status" value="1"/>
</dbReference>
<dbReference type="HAMAP" id="MF_00093">
    <property type="entry name" value="Rel_fac_1"/>
    <property type="match status" value="1"/>
</dbReference>
<dbReference type="InterPro" id="IPR005139">
    <property type="entry name" value="PCRF"/>
</dbReference>
<dbReference type="InterPro" id="IPR000352">
    <property type="entry name" value="Pep_chain_release_fac_I"/>
</dbReference>
<dbReference type="InterPro" id="IPR045853">
    <property type="entry name" value="Pep_chain_release_fac_I_sf"/>
</dbReference>
<dbReference type="InterPro" id="IPR050057">
    <property type="entry name" value="Prokaryotic/Mito_RF"/>
</dbReference>
<dbReference type="InterPro" id="IPR004373">
    <property type="entry name" value="RF-1"/>
</dbReference>
<dbReference type="NCBIfam" id="TIGR00019">
    <property type="entry name" value="prfA"/>
    <property type="match status" value="1"/>
</dbReference>
<dbReference type="NCBIfam" id="NF001859">
    <property type="entry name" value="PRK00591.1"/>
    <property type="match status" value="1"/>
</dbReference>
<dbReference type="PANTHER" id="PTHR43804">
    <property type="entry name" value="LD18447P"/>
    <property type="match status" value="1"/>
</dbReference>
<dbReference type="PANTHER" id="PTHR43804:SF7">
    <property type="entry name" value="LD18447P"/>
    <property type="match status" value="1"/>
</dbReference>
<dbReference type="Pfam" id="PF03462">
    <property type="entry name" value="PCRF"/>
    <property type="match status" value="1"/>
</dbReference>
<dbReference type="Pfam" id="PF00472">
    <property type="entry name" value="RF-1"/>
    <property type="match status" value="1"/>
</dbReference>
<dbReference type="SMART" id="SM00937">
    <property type="entry name" value="PCRF"/>
    <property type="match status" value="1"/>
</dbReference>
<dbReference type="SUPFAM" id="SSF75620">
    <property type="entry name" value="Release factor"/>
    <property type="match status" value="1"/>
</dbReference>
<dbReference type="PROSITE" id="PS00745">
    <property type="entry name" value="RF_PROK_I"/>
    <property type="match status" value="1"/>
</dbReference>
<name>RF1_LEGPC</name>
<protein>
    <recommendedName>
        <fullName evidence="1">Peptide chain release factor 1</fullName>
        <shortName evidence="1">RF-1</shortName>
    </recommendedName>
</protein>
<organism>
    <name type="scientific">Legionella pneumophila (strain Corby)</name>
    <dbReference type="NCBI Taxonomy" id="400673"/>
    <lineage>
        <taxon>Bacteria</taxon>
        <taxon>Pseudomonadati</taxon>
        <taxon>Pseudomonadota</taxon>
        <taxon>Gammaproteobacteria</taxon>
        <taxon>Legionellales</taxon>
        <taxon>Legionellaceae</taxon>
        <taxon>Legionella</taxon>
    </lineage>
</organism>
<reference key="1">
    <citation type="submission" date="2006-11" db="EMBL/GenBank/DDBJ databases">
        <title>Identification and characterization of a new conjugation/ type IVA secretion system (trb/tra) of L. pneumophila Corby localized on a mobile genomic island.</title>
        <authorList>
            <person name="Gloeckner G."/>
            <person name="Albert-Weissenberger C."/>
            <person name="Weinmann E."/>
            <person name="Jacobi S."/>
            <person name="Schunder E."/>
            <person name="Steinert M."/>
            <person name="Buchrieser C."/>
            <person name="Hacker J."/>
            <person name="Heuner K."/>
        </authorList>
    </citation>
    <scope>NUCLEOTIDE SEQUENCE [LARGE SCALE GENOMIC DNA]</scope>
    <source>
        <strain>Corby</strain>
    </source>
</reference>
<comment type="function">
    <text evidence="1">Peptide chain release factor 1 directs the termination of translation in response to the peptide chain termination codons UAG and UAA.</text>
</comment>
<comment type="subcellular location">
    <subcellularLocation>
        <location evidence="1">Cytoplasm</location>
    </subcellularLocation>
</comment>
<comment type="PTM">
    <text evidence="1">Methylated by PrmC. Methylation increases the termination efficiency of RF1.</text>
</comment>
<comment type="similarity">
    <text evidence="1">Belongs to the prokaryotic/mitochondrial release factor family.</text>
</comment>
<accession>A5IED7</accession>
<evidence type="ECO:0000255" key="1">
    <source>
        <dbReference type="HAMAP-Rule" id="MF_00093"/>
    </source>
</evidence>
<sequence length="362" mass="41115">MKKSLELKLQQMLERYEEVGRLLSEASIIADQNQFKSLSKEYAQLEPVSQCYESYLEAKNNLDSLNELLESDDKDLATMAEEEIDIVKKQIEELDEQLQWHLIPKDPDDERNIYLEVRAGTGGDEAAIFAGDLFRMYSRYAESQGWQIELISASHGEHGGYKEIIAKISGQAVYSQLKFESGAHRVQRVPETESQGRVHTSACTVAIMPEVDEINDIQINPDDLRIDTYRSSGAGGQHVNKTDSAIRITHIPTGVVVECQDERSQHKNRAKAMSLLKTRLLDAEVSKQKQEQAQTRKSLVGTGDRSERIRTYNFPQGRLTDHRINLTIYQLSDIMEGNLSLVIDPLKREYHAELLADLGRHD</sequence>
<gene>
    <name evidence="1" type="primary">prfA</name>
    <name type="ordered locus">LPC_1804</name>
</gene>
<feature type="chain" id="PRO_1000004906" description="Peptide chain release factor 1">
    <location>
        <begin position="1"/>
        <end position="362"/>
    </location>
</feature>
<feature type="modified residue" description="N5-methylglutamine" evidence="1">
    <location>
        <position position="237"/>
    </location>
</feature>
<proteinExistence type="inferred from homology"/>